<organism>
    <name type="scientific">Debaryomyces hansenii (strain ATCC 36239 / CBS 767 / BCRC 21394 / JCM 1990 / NBRC 0083 / IGC 2968)</name>
    <name type="common">Yeast</name>
    <name type="synonym">Torulaspora hansenii</name>
    <dbReference type="NCBI Taxonomy" id="284592"/>
    <lineage>
        <taxon>Eukaryota</taxon>
        <taxon>Fungi</taxon>
        <taxon>Dikarya</taxon>
        <taxon>Ascomycota</taxon>
        <taxon>Saccharomycotina</taxon>
        <taxon>Pichiomycetes</taxon>
        <taxon>Debaryomycetaceae</taxon>
        <taxon>Debaryomyces</taxon>
    </lineage>
</organism>
<feature type="chain" id="PRO_0000073952" description="DNA-directed RNA polymerase III subunit RPC1">
    <location>
        <begin position="1"/>
        <end position="1457"/>
    </location>
</feature>
<feature type="region of interest" description="Bridging helix" evidence="1">
    <location>
        <begin position="854"/>
        <end position="866"/>
    </location>
</feature>
<feature type="binding site" evidence="1">
    <location>
        <position position="67"/>
    </location>
    <ligand>
        <name>Zn(2+)</name>
        <dbReference type="ChEBI" id="CHEBI:29105"/>
        <label>1</label>
    </ligand>
</feature>
<feature type="binding site" evidence="1">
    <location>
        <position position="70"/>
    </location>
    <ligand>
        <name>Zn(2+)</name>
        <dbReference type="ChEBI" id="CHEBI:29105"/>
        <label>1</label>
    </ligand>
</feature>
<feature type="binding site" evidence="1">
    <location>
        <position position="77"/>
    </location>
    <ligand>
        <name>Zn(2+)</name>
        <dbReference type="ChEBI" id="CHEBI:29105"/>
        <label>1</label>
    </ligand>
</feature>
<feature type="binding site" evidence="1">
    <location>
        <position position="80"/>
    </location>
    <ligand>
        <name>Zn(2+)</name>
        <dbReference type="ChEBI" id="CHEBI:29105"/>
        <label>1</label>
    </ligand>
</feature>
<feature type="binding site" evidence="1">
    <location>
        <position position="107"/>
    </location>
    <ligand>
        <name>Zn(2+)</name>
        <dbReference type="ChEBI" id="CHEBI:29105"/>
        <label>2</label>
    </ligand>
</feature>
<feature type="binding site" evidence="1">
    <location>
        <position position="110"/>
    </location>
    <ligand>
        <name>Zn(2+)</name>
        <dbReference type="ChEBI" id="CHEBI:29105"/>
        <label>2</label>
    </ligand>
</feature>
<feature type="binding site" evidence="1">
    <location>
        <position position="154"/>
    </location>
    <ligand>
        <name>Zn(2+)</name>
        <dbReference type="ChEBI" id="CHEBI:29105"/>
        <label>2</label>
    </ligand>
</feature>
<feature type="binding site" evidence="1">
    <location>
        <position position="508"/>
    </location>
    <ligand>
        <name>Mg(2+)</name>
        <dbReference type="ChEBI" id="CHEBI:18420"/>
        <note>catalytic</note>
    </ligand>
</feature>
<feature type="binding site" evidence="1">
    <location>
        <position position="510"/>
    </location>
    <ligand>
        <name>Mg(2+)</name>
        <dbReference type="ChEBI" id="CHEBI:18420"/>
        <note>catalytic</note>
    </ligand>
</feature>
<feature type="binding site" evidence="1">
    <location>
        <position position="512"/>
    </location>
    <ligand>
        <name>Mg(2+)</name>
        <dbReference type="ChEBI" id="CHEBI:18420"/>
        <note>catalytic</note>
    </ligand>
</feature>
<keyword id="KW-0240">DNA-directed RNA polymerase</keyword>
<keyword id="KW-0460">Magnesium</keyword>
<keyword id="KW-0479">Metal-binding</keyword>
<keyword id="KW-0548">Nucleotidyltransferase</keyword>
<keyword id="KW-0539">Nucleus</keyword>
<keyword id="KW-1185">Reference proteome</keyword>
<keyword id="KW-0804">Transcription</keyword>
<keyword id="KW-0808">Transferase</keyword>
<keyword id="KW-0862">Zinc</keyword>
<accession>Q6BI69</accession>
<comment type="function">
    <text evidence="1">DNA-dependent RNA polymerase catalyzes the transcription of DNA into RNA using the four ribonucleoside triphosphates as substrates. Largest and catalytic core component of RNA polymerase III which synthesizes small RNAs, such as 5S rRNA and tRNAs. Forms the polymerase active center together with the second largest subunit. A single-stranded DNA template strand of the promoter is positioned within the central active site cleft of Pol III. A bridging helix emanates from RPC1 and crosses the cleft near the catalytic site and is thought to promote translocation of Pol III by acting as a ratchet that moves the RNA-DNA hybrid through the active site by switching from straight to bent conformations at each step of nucleotide addition (By similarity).</text>
</comment>
<comment type="catalytic activity">
    <reaction>
        <text>RNA(n) + a ribonucleoside 5'-triphosphate = RNA(n+1) + diphosphate</text>
        <dbReference type="Rhea" id="RHEA:21248"/>
        <dbReference type="Rhea" id="RHEA-COMP:14527"/>
        <dbReference type="Rhea" id="RHEA-COMP:17342"/>
        <dbReference type="ChEBI" id="CHEBI:33019"/>
        <dbReference type="ChEBI" id="CHEBI:61557"/>
        <dbReference type="ChEBI" id="CHEBI:140395"/>
        <dbReference type="EC" id="2.7.7.6"/>
    </reaction>
</comment>
<comment type="subunit">
    <text evidence="1">Component of the RNA polymerase III (Pol III) complex consisting of 17 subunits.</text>
</comment>
<comment type="subcellular location">
    <subcellularLocation>
        <location evidence="1">Nucleus</location>
    </subcellularLocation>
</comment>
<comment type="similarity">
    <text evidence="2">Belongs to the RNA polymerase beta' chain family.</text>
</comment>
<proteinExistence type="inferred from homology"/>
<gene>
    <name type="primary">RPC1</name>
    <name type="ordered locus">DEHA2G12980g</name>
</gene>
<protein>
    <recommendedName>
        <fullName>DNA-directed RNA polymerase III subunit RPC1</fullName>
        <shortName>RNA polymerase III subunit C1</shortName>
        <ecNumber>2.7.7.6</ecNumber>
    </recommendedName>
    <alternativeName>
        <fullName>DNA-directed RNA polymerase III largest subunit</fullName>
    </alternativeName>
</protein>
<reference key="1">
    <citation type="journal article" date="2004" name="Nature">
        <title>Genome evolution in yeasts.</title>
        <authorList>
            <person name="Dujon B."/>
            <person name="Sherman D."/>
            <person name="Fischer G."/>
            <person name="Durrens P."/>
            <person name="Casaregola S."/>
            <person name="Lafontaine I."/>
            <person name="de Montigny J."/>
            <person name="Marck C."/>
            <person name="Neuveglise C."/>
            <person name="Talla E."/>
            <person name="Goffard N."/>
            <person name="Frangeul L."/>
            <person name="Aigle M."/>
            <person name="Anthouard V."/>
            <person name="Babour A."/>
            <person name="Barbe V."/>
            <person name="Barnay S."/>
            <person name="Blanchin S."/>
            <person name="Beckerich J.-M."/>
            <person name="Beyne E."/>
            <person name="Bleykasten C."/>
            <person name="Boisrame A."/>
            <person name="Boyer J."/>
            <person name="Cattolico L."/>
            <person name="Confanioleri F."/>
            <person name="de Daruvar A."/>
            <person name="Despons L."/>
            <person name="Fabre E."/>
            <person name="Fairhead C."/>
            <person name="Ferry-Dumazet H."/>
            <person name="Groppi A."/>
            <person name="Hantraye F."/>
            <person name="Hennequin C."/>
            <person name="Jauniaux N."/>
            <person name="Joyet P."/>
            <person name="Kachouri R."/>
            <person name="Kerrest A."/>
            <person name="Koszul R."/>
            <person name="Lemaire M."/>
            <person name="Lesur I."/>
            <person name="Ma L."/>
            <person name="Muller H."/>
            <person name="Nicaud J.-M."/>
            <person name="Nikolski M."/>
            <person name="Oztas S."/>
            <person name="Ozier-Kalogeropoulos O."/>
            <person name="Pellenz S."/>
            <person name="Potier S."/>
            <person name="Richard G.-F."/>
            <person name="Straub M.-L."/>
            <person name="Suleau A."/>
            <person name="Swennen D."/>
            <person name="Tekaia F."/>
            <person name="Wesolowski-Louvel M."/>
            <person name="Westhof E."/>
            <person name="Wirth B."/>
            <person name="Zeniou-Meyer M."/>
            <person name="Zivanovic Y."/>
            <person name="Bolotin-Fukuhara M."/>
            <person name="Thierry A."/>
            <person name="Bouchier C."/>
            <person name="Caudron B."/>
            <person name="Scarpelli C."/>
            <person name="Gaillardin C."/>
            <person name="Weissenbach J."/>
            <person name="Wincker P."/>
            <person name="Souciet J.-L."/>
        </authorList>
    </citation>
    <scope>NUCLEOTIDE SEQUENCE [LARGE SCALE GENOMIC DNA]</scope>
    <source>
        <strain>ATCC 36239 / CBS 767 / BCRC 21394 / JCM 1990 / NBRC 0083 / IGC 2968</strain>
    </source>
</reference>
<dbReference type="EC" id="2.7.7.6"/>
<dbReference type="EMBL" id="CR382139">
    <property type="protein sequence ID" value="CAG90588.2"/>
    <property type="molecule type" value="Genomic_DNA"/>
</dbReference>
<dbReference type="RefSeq" id="XP_462102.2">
    <property type="nucleotide sequence ID" value="XM_462102.1"/>
</dbReference>
<dbReference type="SMR" id="Q6BI69"/>
<dbReference type="FunCoup" id="Q6BI69">
    <property type="interactions" value="1012"/>
</dbReference>
<dbReference type="STRING" id="284592.Q6BI69"/>
<dbReference type="GeneID" id="2905015"/>
<dbReference type="KEGG" id="dha:DEHA2G12980g"/>
<dbReference type="VEuPathDB" id="FungiDB:DEHA2G12980g"/>
<dbReference type="eggNOG" id="KOG0261">
    <property type="taxonomic scope" value="Eukaryota"/>
</dbReference>
<dbReference type="HOGENOM" id="CLU_000487_3_0_1"/>
<dbReference type="InParanoid" id="Q6BI69"/>
<dbReference type="OMA" id="AVCPPYN"/>
<dbReference type="OrthoDB" id="270392at2759"/>
<dbReference type="Proteomes" id="UP000000599">
    <property type="component" value="Chromosome G"/>
</dbReference>
<dbReference type="GO" id="GO:0000785">
    <property type="term" value="C:chromatin"/>
    <property type="evidence" value="ECO:0007669"/>
    <property type="project" value="EnsemblFungi"/>
</dbReference>
<dbReference type="GO" id="GO:0005739">
    <property type="term" value="C:mitochondrion"/>
    <property type="evidence" value="ECO:0007669"/>
    <property type="project" value="GOC"/>
</dbReference>
<dbReference type="GO" id="GO:0005666">
    <property type="term" value="C:RNA polymerase III complex"/>
    <property type="evidence" value="ECO:0007669"/>
    <property type="project" value="EnsemblFungi"/>
</dbReference>
<dbReference type="GO" id="GO:0003677">
    <property type="term" value="F:DNA binding"/>
    <property type="evidence" value="ECO:0007669"/>
    <property type="project" value="InterPro"/>
</dbReference>
<dbReference type="GO" id="GO:0003899">
    <property type="term" value="F:DNA-directed RNA polymerase activity"/>
    <property type="evidence" value="ECO:0007669"/>
    <property type="project" value="UniProtKB-EC"/>
</dbReference>
<dbReference type="GO" id="GO:0046872">
    <property type="term" value="F:metal ion binding"/>
    <property type="evidence" value="ECO:0007669"/>
    <property type="project" value="UniProtKB-KW"/>
</dbReference>
<dbReference type="GO" id="GO:0006386">
    <property type="term" value="P:termination of RNA polymerase III transcription"/>
    <property type="evidence" value="ECO:0007669"/>
    <property type="project" value="EnsemblFungi"/>
</dbReference>
<dbReference type="GO" id="GO:0006384">
    <property type="term" value="P:transcription initiation at RNA polymerase III promoter"/>
    <property type="evidence" value="ECO:0007669"/>
    <property type="project" value="EnsemblFungi"/>
</dbReference>
<dbReference type="GO" id="GO:0042797">
    <property type="term" value="P:tRNA transcription by RNA polymerase III"/>
    <property type="evidence" value="ECO:0007669"/>
    <property type="project" value="EnsemblFungi"/>
</dbReference>
<dbReference type="CDD" id="cd02736">
    <property type="entry name" value="RNAP_III_Rpc1_C"/>
    <property type="match status" value="1"/>
</dbReference>
<dbReference type="CDD" id="cd02583">
    <property type="entry name" value="RNAP_III_RPC1_N"/>
    <property type="match status" value="1"/>
</dbReference>
<dbReference type="FunFam" id="2.40.40.20:FF:000019">
    <property type="entry name" value="DNA-directed RNA polymerase II subunit RPB1"/>
    <property type="match status" value="1"/>
</dbReference>
<dbReference type="FunFam" id="1.10.132.30:FF:000001">
    <property type="entry name" value="DNA-directed RNA polymerase subunit"/>
    <property type="match status" value="1"/>
</dbReference>
<dbReference type="FunFam" id="1.10.150.390:FF:000004">
    <property type="entry name" value="DNA-directed RNA polymerase subunit"/>
    <property type="match status" value="1"/>
</dbReference>
<dbReference type="FunFam" id="1.10.274.100:FF:000005">
    <property type="entry name" value="DNA-directed RNA polymerase subunit"/>
    <property type="match status" value="1"/>
</dbReference>
<dbReference type="FunFam" id="3.30.1490.180:FF:000002">
    <property type="entry name" value="DNA-directed RNA polymerase subunit"/>
    <property type="match status" value="1"/>
</dbReference>
<dbReference type="FunFam" id="4.10.860.120:FF:000004">
    <property type="entry name" value="DNA-directed RNA polymerase subunit"/>
    <property type="match status" value="1"/>
</dbReference>
<dbReference type="Gene3D" id="1.10.132.30">
    <property type="match status" value="1"/>
</dbReference>
<dbReference type="Gene3D" id="1.10.150.390">
    <property type="match status" value="1"/>
</dbReference>
<dbReference type="Gene3D" id="2.40.40.20">
    <property type="match status" value="1"/>
</dbReference>
<dbReference type="Gene3D" id="6.10.250.2940">
    <property type="match status" value="1"/>
</dbReference>
<dbReference type="Gene3D" id="6.20.50.80">
    <property type="match status" value="1"/>
</dbReference>
<dbReference type="Gene3D" id="3.30.1490.180">
    <property type="entry name" value="RNA polymerase ii"/>
    <property type="match status" value="1"/>
</dbReference>
<dbReference type="Gene3D" id="4.10.860.120">
    <property type="entry name" value="RNA polymerase II, clamp domain"/>
    <property type="match status" value="1"/>
</dbReference>
<dbReference type="Gene3D" id="1.10.274.100">
    <property type="entry name" value="RNA polymerase Rpb1, domain 3"/>
    <property type="match status" value="1"/>
</dbReference>
<dbReference type="InterPro" id="IPR000722">
    <property type="entry name" value="RNA_pol_asu"/>
</dbReference>
<dbReference type="InterPro" id="IPR006592">
    <property type="entry name" value="RNA_pol_N"/>
</dbReference>
<dbReference type="InterPro" id="IPR007080">
    <property type="entry name" value="RNA_pol_Rpb1_1"/>
</dbReference>
<dbReference type="InterPro" id="IPR007066">
    <property type="entry name" value="RNA_pol_Rpb1_3"/>
</dbReference>
<dbReference type="InterPro" id="IPR042102">
    <property type="entry name" value="RNA_pol_Rpb1_3_sf"/>
</dbReference>
<dbReference type="InterPro" id="IPR007083">
    <property type="entry name" value="RNA_pol_Rpb1_4"/>
</dbReference>
<dbReference type="InterPro" id="IPR007081">
    <property type="entry name" value="RNA_pol_Rpb1_5"/>
</dbReference>
<dbReference type="InterPro" id="IPR044893">
    <property type="entry name" value="RNA_pol_Rpb1_clamp_domain"/>
</dbReference>
<dbReference type="InterPro" id="IPR035698">
    <property type="entry name" value="RNAP_III_Rpc1_C"/>
</dbReference>
<dbReference type="InterPro" id="IPR035697">
    <property type="entry name" value="RNAP_III_RPC1_N"/>
</dbReference>
<dbReference type="InterPro" id="IPR038120">
    <property type="entry name" value="Rpb1_funnel_sf"/>
</dbReference>
<dbReference type="InterPro" id="IPR015700">
    <property type="entry name" value="RPC1"/>
</dbReference>
<dbReference type="NCBIfam" id="NF006336">
    <property type="entry name" value="PRK08566.1"/>
    <property type="match status" value="1"/>
</dbReference>
<dbReference type="PANTHER" id="PTHR48446">
    <property type="entry name" value="DNA-DIRECTED RNA POLYMERASE SUBUNIT BETA' N-TERMINAL SECTION"/>
    <property type="match status" value="1"/>
</dbReference>
<dbReference type="PANTHER" id="PTHR48446:SF1">
    <property type="entry name" value="DNA-DIRECTED RNA POLYMERASE SUBUNIT BETA' N-TERMINAL SECTION"/>
    <property type="match status" value="1"/>
</dbReference>
<dbReference type="Pfam" id="PF04997">
    <property type="entry name" value="RNA_pol_Rpb1_1"/>
    <property type="match status" value="1"/>
</dbReference>
<dbReference type="Pfam" id="PF00623">
    <property type="entry name" value="RNA_pol_Rpb1_2"/>
    <property type="match status" value="1"/>
</dbReference>
<dbReference type="Pfam" id="PF04983">
    <property type="entry name" value="RNA_pol_Rpb1_3"/>
    <property type="match status" value="1"/>
</dbReference>
<dbReference type="Pfam" id="PF05000">
    <property type="entry name" value="RNA_pol_Rpb1_4"/>
    <property type="match status" value="1"/>
</dbReference>
<dbReference type="Pfam" id="PF04998">
    <property type="entry name" value="RNA_pol_Rpb1_5"/>
    <property type="match status" value="1"/>
</dbReference>
<dbReference type="SMART" id="SM00663">
    <property type="entry name" value="RPOLA_N"/>
    <property type="match status" value="1"/>
</dbReference>
<dbReference type="SUPFAM" id="SSF64484">
    <property type="entry name" value="beta and beta-prime subunits of DNA dependent RNA-polymerase"/>
    <property type="match status" value="1"/>
</dbReference>
<name>RPC1_DEBHA</name>
<evidence type="ECO:0000250" key="1"/>
<evidence type="ECO:0000305" key="2"/>
<sequence>MKEVVVDVAPKCIKGIEFGALSAKDIIAQSEVEVHTRDLYDLEKGRIPKDGGALDTKMGISSNANECATCHGNLASCHGHFGHIKLALPVFHVGYFKATIQVLQCICKNCSAVLLDEQTKRSFLNDLRRPHIDNLRRMKILKKLLEQCKKQRRCLNCNHVNGVVKKAASGAGPAALKIVHDTFRWIGKKATPEKDLWDKEFDEVFSRNPELEKFVKRIHDDLNPLKVLNLFKQISPSDCELLGIDSARGGRPEMYIWRYLPAPPVCIRPSVMMDAQSNEDDLTIKLTEIVWTSSLIKAGIEKGISINNLMEQWDYLQLSVAMYINSDSANPALLPSSGGGSKSSKPIRGFCQRLKGKQGRFRGNLSGKRVDFSGRTVISPDPNLKIDEVAVPDRVAKVLTYPEKCTRYNRKKLQKLILSGPNVHPGANYLLKQNESAKRNLRFGDRVKLAKNLHIGDVVERHIEDGDIVLFNRQPSLHRLSILSHYAKIRPWRTFRLNECVCTPYNADFDGDEMNIHVPQTEEARAEAINLMGVKNNLLTPKSGEPIIAATQDFITGSYLVSHKDSFFDRASLVQLLCMMSDADIQFDIPPPAIFKPVMLWTGKQVFSLLIKPNKKSNVVINLDAKNKTYTPPAKGFPNEMSPNDGFVIIRGSQILSGVMDKSTLGDGKKHSVFYTILRDYGPDEAANAMNRMAKLCARYLGNRGFSIGINDVIPGSDLKQKKELMVEQAYLKCDELIDLYNRGNLETQPGCNEEQTLEAKIGGLLSKVREEVGEICINELDSANAPLIMATCGSKGSTLNVSQMVAVVGQQIISGNRVPDGFQDRSLPHFTKNSKTPQSKGFVRNSFFSGLTPPEFLFHSISGREGLVDTAVKTAETGYMSRRLMKSLDDLSAQYDHTVRNSSNGIVQFTYGGDGLDPFDMEGDARPVNFVRQWDHAYNITFDIEDKGLLPYQIIELVDSILHPLEDRLVRYDNVGKIIPLEDSDKIEYIDQNDAEREFYQSIREFTTNKATKLAEIREKKMLKPFLTEPAEDFIRLDESDESLVAINQLSKVSANSINKFLEQCIYKYSRAKVEPGTAVGAIGAQSIGEPGTQMTLKTFHFAGVASMNVTLGVPRIKEIINASKVISTPIINSVLVNDDDEIAARVVKGRVEKTLLEDVAYFIEDVYKNNMAYLSIKIDLNTIEKLQLELNIESIAHSIANAPKLKILAGDVSVTGKDRINVLVTLREPKSINLMKNASADYKGTDASIVNSLFFRMQHLKRALPRICIKGLPDISRAVINIRDDGKKELLVEGYGLKEVMSTDGVVGTKTSTNHILEVFQVLGIEAARASIIGEIDYTMSKHGMSVDPRHIQLLGDVMTYKGEVLGITRFGLSKMRDSVLQLASFEKTTDHLFDASFYMKNDKIEGVSECIILGQTMNIGTGAFKLVNSFDVDKKALEMKPTLFEGMCEVSATA</sequence>